<gene>
    <name type="primary">cit 1-8</name>
</gene>
<name>CTX18_LACTA</name>
<comment type="function">
    <text evidence="3">Insecticidal, cytolytic and antimicrobial peptide. Has insecticidal activity against the flesh fly S.carnaria. Has antibacterial activity against the Gram-negative bacteria E.coli. Forms voltage-dependent, ion-permeable channels in membranes. At high concentration causes cell membrane lysis.</text>
</comment>
<comment type="subcellular location">
    <subcellularLocation>
        <location evidence="3 4">Secreted</location>
    </subcellularLocation>
</comment>
<comment type="tissue specificity">
    <text evidence="3">Expressed by the venom gland.</text>
</comment>
<comment type="domain">
    <text evidence="1">Both the N-terminus (61-94) and the C-terminus (99-129) of the mature peptide form alpha-helices which probably disrupt target cell membranes. The linker region (95-98) probably derives from a processing quadruplet motif (PQM), found in propeptides of many zodatoxins, hinting at a fusion of two originally separate membrane-active peptides.</text>
</comment>
<comment type="PTM">
    <text evidence="6">Cleavage of the propeptide depends on the processing quadruplet motif (XXXR, with at least one of X being E).</text>
</comment>
<comment type="mass spectrometry" mass="7866.1" method="MALDI" evidence="4"/>
<comment type="similarity">
    <text evidence="7">Belongs to the cationic peptide 06 (cytoinsectotoxin) family.</text>
</comment>
<evidence type="ECO:0000250" key="1">
    <source>
        <dbReference type="UniProtKB" id="P85253"/>
    </source>
</evidence>
<evidence type="ECO:0000255" key="2"/>
<evidence type="ECO:0000269" key="3">
    <source>
    </source>
</evidence>
<evidence type="ECO:0000269" key="4">
    <source>
    </source>
</evidence>
<evidence type="ECO:0000303" key="5">
    <source>
    </source>
</evidence>
<evidence type="ECO:0000303" key="6">
    <source>
    </source>
</evidence>
<evidence type="ECO:0000305" key="7"/>
<keyword id="KW-0044">Antibiotic</keyword>
<keyword id="KW-0929">Antimicrobial</keyword>
<keyword id="KW-0204">Cytolysis</keyword>
<keyword id="KW-0903">Direct protein sequencing</keyword>
<keyword id="KW-0354">Hemolysis</keyword>
<keyword id="KW-0964">Secreted</keyword>
<keyword id="KW-0732">Signal</keyword>
<keyword id="KW-0800">Toxin</keyword>
<dbReference type="EMBL" id="FM165480">
    <property type="protein sequence ID" value="CAQ63556.1"/>
    <property type="molecule type" value="mRNA"/>
</dbReference>
<dbReference type="SMR" id="P85259"/>
<dbReference type="ArachnoServer" id="AS000674">
    <property type="toxin name" value="M-zodatoxin-Lt8g"/>
</dbReference>
<dbReference type="GO" id="GO:0005576">
    <property type="term" value="C:extracellular region"/>
    <property type="evidence" value="ECO:0000314"/>
    <property type="project" value="UniProtKB"/>
</dbReference>
<dbReference type="GO" id="GO:0090729">
    <property type="term" value="F:toxin activity"/>
    <property type="evidence" value="ECO:0007669"/>
    <property type="project" value="UniProtKB-KW"/>
</dbReference>
<dbReference type="GO" id="GO:0051838">
    <property type="term" value="P:cytolysis by host of symbiont cells"/>
    <property type="evidence" value="ECO:0000314"/>
    <property type="project" value="UniProtKB"/>
</dbReference>
<dbReference type="GO" id="GO:0050829">
    <property type="term" value="P:defense response to Gram-negative bacterium"/>
    <property type="evidence" value="ECO:0000314"/>
    <property type="project" value="UniProtKB"/>
</dbReference>
<dbReference type="GO" id="GO:0050830">
    <property type="term" value="P:defense response to Gram-positive bacterium"/>
    <property type="evidence" value="ECO:0000250"/>
    <property type="project" value="UniProtKB"/>
</dbReference>
<dbReference type="InterPro" id="IPR018802">
    <property type="entry name" value="Latarcin_precursor"/>
</dbReference>
<dbReference type="Pfam" id="PF10279">
    <property type="entry name" value="Latarcin"/>
    <property type="match status" value="1"/>
</dbReference>
<feature type="signal peptide" evidence="2">
    <location>
        <begin position="1"/>
        <end position="20"/>
    </location>
</feature>
<feature type="propeptide" id="PRO_0000366080" evidence="3">
    <location>
        <begin position="21"/>
        <end position="60"/>
    </location>
</feature>
<feature type="chain" id="PRO_0000337164" description="M-zodatoxin-Lt8g">
    <location>
        <begin position="61"/>
        <end position="129"/>
    </location>
</feature>
<feature type="short sequence motif" description="Processing quadruplet motif" evidence="6">
    <location>
        <begin position="57"/>
        <end position="60"/>
    </location>
</feature>
<protein>
    <recommendedName>
        <fullName>M-zodatoxin-Lt8g</fullName>
        <shortName>M-ZDTX-Lt8g</shortName>
    </recommendedName>
    <alternativeName>
        <fullName evidence="5">Cytoinsectotoxin-1g</fullName>
        <shortName evidence="5">CIT-1g</shortName>
    </alternativeName>
</protein>
<sequence length="129" mass="14522">MKYFVVALALVAAFACIAESKPAESEHELAEVEEENELADLEDAVWLEHLADLSDLEEARGFFGNTWKKIKGKADKIMLKKAVKIMVKKEGISKEEAQAKVDAMSKKQIRLYVLKHYGKKALQKASEKL</sequence>
<organism>
    <name type="scientific">Lachesana tarabaevi</name>
    <name type="common">Spider</name>
    <dbReference type="NCBI Taxonomy" id="379576"/>
    <lineage>
        <taxon>Eukaryota</taxon>
        <taxon>Metazoa</taxon>
        <taxon>Ecdysozoa</taxon>
        <taxon>Arthropoda</taxon>
        <taxon>Chelicerata</taxon>
        <taxon>Arachnida</taxon>
        <taxon>Araneae</taxon>
        <taxon>Araneomorphae</taxon>
        <taxon>Entelegynae</taxon>
        <taxon>Entelegynae incertae sedis</taxon>
        <taxon>Zodariidae</taxon>
        <taxon>Lachesana</taxon>
    </lineage>
</organism>
<accession>P85259</accession>
<accession>B3W6I5</accession>
<reference evidence="7" key="1">
    <citation type="journal article" date="2008" name="Biochem. J.">
        <title>Cyto-insectotoxins, a novel class of cytolytic and insecticidal peptides from spider venom.</title>
        <authorList>
            <person name="Vassilevski A.A."/>
            <person name="Kozlov S.A."/>
            <person name="Samsonova O.V."/>
            <person name="Egorova N.S."/>
            <person name="Karpunin D.V."/>
            <person name="Pluzhnikov K.A."/>
            <person name="Feofanov A.V."/>
            <person name="Grishin E.V."/>
        </authorList>
    </citation>
    <scope>NUCLEOTIDE SEQUENCE [MRNA]</scope>
    <scope>PROTEIN SEQUENCE OF 61-129</scope>
    <scope>FUNCTION</scope>
    <scope>SUBCELLULAR LOCATION</scope>
    <scope>TISSUE SPECIFICITY</scope>
    <source>
        <tissue evidence="3">Venom</tissue>
        <tissue>Venom gland</tissue>
    </source>
</reference>
<reference key="2">
    <citation type="journal article" date="2016" name="Biochem. J.">
        <title>Lachesana tarabaevi, an expert in membrane-active toxins.</title>
        <authorList>
            <person name="Kuzmenkov A.I."/>
            <person name="Sachkova M.Y."/>
            <person name="Kovalchuk S.I."/>
            <person name="Grishin E.V."/>
            <person name="Vassilevski A.A."/>
        </authorList>
    </citation>
    <scope>SUBCELLULAR LOCATION</scope>
    <scope>PQM MOTIF</scope>
    <scope>MASS SPECTROMETRY</scope>
    <source>
        <tissue evidence="6">Venom</tissue>
    </source>
</reference>
<proteinExistence type="evidence at protein level"/>